<sequence length="168" mass="18868">MLAVYPGSFDPITLGHLDIIERGARLFSEVIVAIAHNPQKKALFSVGQRIKQVQAATSHLKNVRVDTFDGLTVEYARSQRARVLLRGLRVLSDFEYELQMSHTNKSLWPEIETVFLTTSNEYSFLSSSLVKEIARFGGNVRHLVPANVAKDLEACFTQTPIPSQRPLE</sequence>
<comment type="function">
    <text evidence="1">Reversibly transfers an adenylyl group from ATP to 4'-phosphopantetheine, yielding dephospho-CoA (dPCoA) and pyrophosphate.</text>
</comment>
<comment type="catalytic activity">
    <reaction evidence="1">
        <text>(R)-4'-phosphopantetheine + ATP + H(+) = 3'-dephospho-CoA + diphosphate</text>
        <dbReference type="Rhea" id="RHEA:19801"/>
        <dbReference type="ChEBI" id="CHEBI:15378"/>
        <dbReference type="ChEBI" id="CHEBI:30616"/>
        <dbReference type="ChEBI" id="CHEBI:33019"/>
        <dbReference type="ChEBI" id="CHEBI:57328"/>
        <dbReference type="ChEBI" id="CHEBI:61723"/>
        <dbReference type="EC" id="2.7.7.3"/>
    </reaction>
</comment>
<comment type="cofactor">
    <cofactor evidence="1">
        <name>Mg(2+)</name>
        <dbReference type="ChEBI" id="CHEBI:18420"/>
    </cofactor>
</comment>
<comment type="pathway">
    <text evidence="1">Cofactor biosynthesis; coenzyme A biosynthesis; CoA from (R)-pantothenate: step 4/5.</text>
</comment>
<comment type="subunit">
    <text evidence="1">Homohexamer.</text>
</comment>
<comment type="subcellular location">
    <subcellularLocation>
        <location evidence="1">Cytoplasm</location>
    </subcellularLocation>
</comment>
<comment type="similarity">
    <text evidence="1">Belongs to the bacterial CoaD family.</text>
</comment>
<dbReference type="EC" id="2.7.7.3" evidence="1"/>
<dbReference type="EMBL" id="BA000039">
    <property type="protein sequence ID" value="BAC08717.1"/>
    <property type="molecule type" value="Genomic_DNA"/>
</dbReference>
<dbReference type="RefSeq" id="NP_681955.1">
    <property type="nucleotide sequence ID" value="NC_004113.1"/>
</dbReference>
<dbReference type="RefSeq" id="WP_011057007.1">
    <property type="nucleotide sequence ID" value="NC_004113.1"/>
</dbReference>
<dbReference type="SMR" id="Q8DJQ7"/>
<dbReference type="STRING" id="197221.gene:10747760"/>
<dbReference type="EnsemblBacteria" id="BAC08717">
    <property type="protein sequence ID" value="BAC08717"/>
    <property type="gene ID" value="BAC08717"/>
</dbReference>
<dbReference type="KEGG" id="tel:tlr1165"/>
<dbReference type="PATRIC" id="fig|197221.4.peg.1225"/>
<dbReference type="eggNOG" id="COG0669">
    <property type="taxonomic scope" value="Bacteria"/>
</dbReference>
<dbReference type="UniPathway" id="UPA00241">
    <property type="reaction ID" value="UER00355"/>
</dbReference>
<dbReference type="Proteomes" id="UP000000440">
    <property type="component" value="Chromosome"/>
</dbReference>
<dbReference type="GO" id="GO:0005737">
    <property type="term" value="C:cytoplasm"/>
    <property type="evidence" value="ECO:0007669"/>
    <property type="project" value="UniProtKB-SubCell"/>
</dbReference>
<dbReference type="GO" id="GO:0005524">
    <property type="term" value="F:ATP binding"/>
    <property type="evidence" value="ECO:0007669"/>
    <property type="project" value="UniProtKB-KW"/>
</dbReference>
<dbReference type="GO" id="GO:0004595">
    <property type="term" value="F:pantetheine-phosphate adenylyltransferase activity"/>
    <property type="evidence" value="ECO:0007669"/>
    <property type="project" value="UniProtKB-UniRule"/>
</dbReference>
<dbReference type="GO" id="GO:0015937">
    <property type="term" value="P:coenzyme A biosynthetic process"/>
    <property type="evidence" value="ECO:0007669"/>
    <property type="project" value="UniProtKB-UniRule"/>
</dbReference>
<dbReference type="CDD" id="cd02163">
    <property type="entry name" value="PPAT"/>
    <property type="match status" value="1"/>
</dbReference>
<dbReference type="Gene3D" id="3.40.50.620">
    <property type="entry name" value="HUPs"/>
    <property type="match status" value="1"/>
</dbReference>
<dbReference type="HAMAP" id="MF_00151">
    <property type="entry name" value="PPAT_bact"/>
    <property type="match status" value="1"/>
</dbReference>
<dbReference type="InterPro" id="IPR004821">
    <property type="entry name" value="Cyt_trans-like"/>
</dbReference>
<dbReference type="InterPro" id="IPR001980">
    <property type="entry name" value="PPAT"/>
</dbReference>
<dbReference type="InterPro" id="IPR014729">
    <property type="entry name" value="Rossmann-like_a/b/a_fold"/>
</dbReference>
<dbReference type="NCBIfam" id="TIGR01510">
    <property type="entry name" value="coaD_prev_kdtB"/>
    <property type="match status" value="1"/>
</dbReference>
<dbReference type="NCBIfam" id="TIGR00125">
    <property type="entry name" value="cyt_tran_rel"/>
    <property type="match status" value="1"/>
</dbReference>
<dbReference type="PANTHER" id="PTHR21342">
    <property type="entry name" value="PHOSPHOPANTETHEINE ADENYLYLTRANSFERASE"/>
    <property type="match status" value="1"/>
</dbReference>
<dbReference type="PANTHER" id="PTHR21342:SF1">
    <property type="entry name" value="PHOSPHOPANTETHEINE ADENYLYLTRANSFERASE"/>
    <property type="match status" value="1"/>
</dbReference>
<dbReference type="Pfam" id="PF01467">
    <property type="entry name" value="CTP_transf_like"/>
    <property type="match status" value="1"/>
</dbReference>
<dbReference type="PRINTS" id="PR01020">
    <property type="entry name" value="LPSBIOSNTHSS"/>
</dbReference>
<dbReference type="SUPFAM" id="SSF52374">
    <property type="entry name" value="Nucleotidylyl transferase"/>
    <property type="match status" value="1"/>
</dbReference>
<reference key="1">
    <citation type="journal article" date="2002" name="DNA Res.">
        <title>Complete genome structure of the thermophilic cyanobacterium Thermosynechococcus elongatus BP-1.</title>
        <authorList>
            <person name="Nakamura Y."/>
            <person name="Kaneko T."/>
            <person name="Sato S."/>
            <person name="Ikeuchi M."/>
            <person name="Katoh H."/>
            <person name="Sasamoto S."/>
            <person name="Watanabe A."/>
            <person name="Iriguchi M."/>
            <person name="Kawashima K."/>
            <person name="Kimura T."/>
            <person name="Kishida Y."/>
            <person name="Kiyokawa C."/>
            <person name="Kohara M."/>
            <person name="Matsumoto M."/>
            <person name="Matsuno A."/>
            <person name="Nakazaki N."/>
            <person name="Shimpo S."/>
            <person name="Sugimoto M."/>
            <person name="Takeuchi C."/>
            <person name="Yamada M."/>
            <person name="Tabata S."/>
        </authorList>
    </citation>
    <scope>NUCLEOTIDE SEQUENCE [LARGE SCALE GENOMIC DNA]</scope>
    <source>
        <strain>NIES-2133 / IAM M-273 / BP-1</strain>
    </source>
</reference>
<feature type="chain" id="PRO_0000156291" description="Phosphopantetheine adenylyltransferase">
    <location>
        <begin position="1"/>
        <end position="168"/>
    </location>
</feature>
<feature type="binding site" evidence="1">
    <location>
        <begin position="8"/>
        <end position="9"/>
    </location>
    <ligand>
        <name>ATP</name>
        <dbReference type="ChEBI" id="CHEBI:30616"/>
    </ligand>
</feature>
<feature type="binding site" evidence="1">
    <location>
        <position position="8"/>
    </location>
    <ligand>
        <name>substrate</name>
    </ligand>
</feature>
<feature type="binding site" evidence="1">
    <location>
        <position position="16"/>
    </location>
    <ligand>
        <name>ATP</name>
        <dbReference type="ChEBI" id="CHEBI:30616"/>
    </ligand>
</feature>
<feature type="binding site" evidence="1">
    <location>
        <position position="40"/>
    </location>
    <ligand>
        <name>substrate</name>
    </ligand>
</feature>
<feature type="binding site" evidence="1">
    <location>
        <position position="72"/>
    </location>
    <ligand>
        <name>substrate</name>
    </ligand>
</feature>
<feature type="binding site" evidence="1">
    <location>
        <position position="86"/>
    </location>
    <ligand>
        <name>substrate</name>
    </ligand>
</feature>
<feature type="binding site" evidence="1">
    <location>
        <begin position="87"/>
        <end position="89"/>
    </location>
    <ligand>
        <name>ATP</name>
        <dbReference type="ChEBI" id="CHEBI:30616"/>
    </ligand>
</feature>
<feature type="binding site" evidence="1">
    <location>
        <position position="97"/>
    </location>
    <ligand>
        <name>ATP</name>
        <dbReference type="ChEBI" id="CHEBI:30616"/>
    </ligand>
</feature>
<feature type="binding site" evidence="1">
    <location>
        <begin position="122"/>
        <end position="128"/>
    </location>
    <ligand>
        <name>ATP</name>
        <dbReference type="ChEBI" id="CHEBI:30616"/>
    </ligand>
</feature>
<feature type="site" description="Transition state stabilizer" evidence="1">
    <location>
        <position position="16"/>
    </location>
</feature>
<keyword id="KW-0067">ATP-binding</keyword>
<keyword id="KW-0173">Coenzyme A biosynthesis</keyword>
<keyword id="KW-0963">Cytoplasm</keyword>
<keyword id="KW-0460">Magnesium</keyword>
<keyword id="KW-0547">Nucleotide-binding</keyword>
<keyword id="KW-0548">Nucleotidyltransferase</keyword>
<keyword id="KW-1185">Reference proteome</keyword>
<keyword id="KW-0808">Transferase</keyword>
<accession>Q8DJQ7</accession>
<protein>
    <recommendedName>
        <fullName evidence="1">Phosphopantetheine adenylyltransferase</fullName>
        <ecNumber evidence="1">2.7.7.3</ecNumber>
    </recommendedName>
    <alternativeName>
        <fullName evidence="1">Dephospho-CoA pyrophosphorylase</fullName>
    </alternativeName>
    <alternativeName>
        <fullName evidence="1">Pantetheine-phosphate adenylyltransferase</fullName>
        <shortName evidence="1">PPAT</shortName>
    </alternativeName>
</protein>
<evidence type="ECO:0000255" key="1">
    <source>
        <dbReference type="HAMAP-Rule" id="MF_00151"/>
    </source>
</evidence>
<name>COAD_THEVB</name>
<gene>
    <name evidence="1" type="primary">coaD</name>
    <name type="ordered locus">tlr1165</name>
</gene>
<organism>
    <name type="scientific">Thermosynechococcus vestitus (strain NIES-2133 / IAM M-273 / BP-1)</name>
    <dbReference type="NCBI Taxonomy" id="197221"/>
    <lineage>
        <taxon>Bacteria</taxon>
        <taxon>Bacillati</taxon>
        <taxon>Cyanobacteriota</taxon>
        <taxon>Cyanophyceae</taxon>
        <taxon>Acaryochloridales</taxon>
        <taxon>Thermosynechococcaceae</taxon>
        <taxon>Thermosynechococcus</taxon>
    </lineage>
</organism>
<proteinExistence type="inferred from homology"/>